<organism>
    <name type="scientific">Citrobacter koseri (strain ATCC BAA-895 / CDC 4225-83 / SGSC4696)</name>
    <dbReference type="NCBI Taxonomy" id="290338"/>
    <lineage>
        <taxon>Bacteria</taxon>
        <taxon>Pseudomonadati</taxon>
        <taxon>Pseudomonadota</taxon>
        <taxon>Gammaproteobacteria</taxon>
        <taxon>Enterobacterales</taxon>
        <taxon>Enterobacteriaceae</taxon>
        <taxon>Citrobacter</taxon>
    </lineage>
</organism>
<evidence type="ECO:0000255" key="1">
    <source>
        <dbReference type="HAMAP-Rule" id="MF_00509"/>
    </source>
</evidence>
<evidence type="ECO:0000256" key="2">
    <source>
        <dbReference type="SAM" id="MobiDB-lite"/>
    </source>
</evidence>
<dbReference type="EMBL" id="CP000822">
    <property type="protein sequence ID" value="ABV11544.1"/>
    <property type="molecule type" value="Genomic_DNA"/>
</dbReference>
<dbReference type="RefSeq" id="WP_012131371.1">
    <property type="nucleotide sequence ID" value="NC_009792.1"/>
</dbReference>
<dbReference type="SMR" id="A8ADI1"/>
<dbReference type="STRING" id="290338.CKO_00381"/>
<dbReference type="GeneID" id="45134645"/>
<dbReference type="KEGG" id="cko:CKO_00381"/>
<dbReference type="HOGENOM" id="CLU_030174_1_0_6"/>
<dbReference type="OrthoDB" id="7054914at2"/>
<dbReference type="Proteomes" id="UP000008148">
    <property type="component" value="Chromosome"/>
</dbReference>
<dbReference type="GO" id="GO:0032153">
    <property type="term" value="C:cell division site"/>
    <property type="evidence" value="ECO:0007669"/>
    <property type="project" value="UniProtKB-UniRule"/>
</dbReference>
<dbReference type="GO" id="GO:0005886">
    <property type="term" value="C:plasma membrane"/>
    <property type="evidence" value="ECO:0007669"/>
    <property type="project" value="UniProtKB-SubCell"/>
</dbReference>
<dbReference type="GO" id="GO:0000917">
    <property type="term" value="P:division septum assembly"/>
    <property type="evidence" value="ECO:0007669"/>
    <property type="project" value="TreeGrafter"/>
</dbReference>
<dbReference type="GO" id="GO:0043093">
    <property type="term" value="P:FtsZ-dependent cytokinesis"/>
    <property type="evidence" value="ECO:0007669"/>
    <property type="project" value="UniProtKB-UniRule"/>
</dbReference>
<dbReference type="CDD" id="cd00231">
    <property type="entry name" value="ZipA"/>
    <property type="match status" value="1"/>
</dbReference>
<dbReference type="FunFam" id="3.30.1400.10:FF:000001">
    <property type="entry name" value="Cell division protein ZipA"/>
    <property type="match status" value="1"/>
</dbReference>
<dbReference type="Gene3D" id="3.30.1400.10">
    <property type="entry name" value="ZipA, C-terminal FtsZ-binding domain"/>
    <property type="match status" value="1"/>
</dbReference>
<dbReference type="HAMAP" id="MF_00509">
    <property type="entry name" value="ZipA"/>
    <property type="match status" value="1"/>
</dbReference>
<dbReference type="InterPro" id="IPR011919">
    <property type="entry name" value="Cell_div_ZipA"/>
</dbReference>
<dbReference type="InterPro" id="IPR007449">
    <property type="entry name" value="ZipA_FtsZ-bd_C"/>
</dbReference>
<dbReference type="InterPro" id="IPR036765">
    <property type="entry name" value="ZipA_FtsZ-bd_C_sf"/>
</dbReference>
<dbReference type="NCBIfam" id="TIGR02205">
    <property type="entry name" value="septum_zipA"/>
    <property type="match status" value="1"/>
</dbReference>
<dbReference type="PANTHER" id="PTHR38685">
    <property type="entry name" value="CELL DIVISION PROTEIN ZIPA"/>
    <property type="match status" value="1"/>
</dbReference>
<dbReference type="PANTHER" id="PTHR38685:SF1">
    <property type="entry name" value="CELL DIVISION PROTEIN ZIPA"/>
    <property type="match status" value="1"/>
</dbReference>
<dbReference type="Pfam" id="PF04354">
    <property type="entry name" value="ZipA_C"/>
    <property type="match status" value="1"/>
</dbReference>
<dbReference type="SMART" id="SM00771">
    <property type="entry name" value="ZipA_C"/>
    <property type="match status" value="1"/>
</dbReference>
<dbReference type="SUPFAM" id="SSF64383">
    <property type="entry name" value="Cell-division protein ZipA, C-terminal domain"/>
    <property type="match status" value="1"/>
</dbReference>
<gene>
    <name evidence="1" type="primary">zipA</name>
    <name type="ordered locus">CKO_00381</name>
</gene>
<feature type="chain" id="PRO_1000015139" description="Cell division protein ZipA">
    <location>
        <begin position="1"/>
        <end position="341"/>
    </location>
</feature>
<feature type="topological domain" description="Periplasmic" evidence="1">
    <location>
        <begin position="1"/>
        <end position="6"/>
    </location>
</feature>
<feature type="transmembrane region" description="Helical" evidence="1">
    <location>
        <begin position="7"/>
        <end position="27"/>
    </location>
</feature>
<feature type="topological domain" description="Cytoplasmic" evidence="1">
    <location>
        <begin position="28"/>
        <end position="341"/>
    </location>
</feature>
<feature type="region of interest" description="Disordered" evidence="2">
    <location>
        <begin position="42"/>
        <end position="199"/>
    </location>
</feature>
<feature type="compositionally biased region" description="Acidic residues" evidence="2">
    <location>
        <begin position="51"/>
        <end position="63"/>
    </location>
</feature>
<feature type="compositionally biased region" description="Low complexity" evidence="2">
    <location>
        <begin position="85"/>
        <end position="105"/>
    </location>
</feature>
<feature type="compositionally biased region" description="Low complexity" evidence="2">
    <location>
        <begin position="113"/>
        <end position="156"/>
    </location>
</feature>
<feature type="compositionally biased region" description="Pro residues" evidence="2">
    <location>
        <begin position="157"/>
        <end position="170"/>
    </location>
</feature>
<feature type="compositionally biased region" description="Low complexity" evidence="2">
    <location>
        <begin position="171"/>
        <end position="181"/>
    </location>
</feature>
<protein>
    <recommendedName>
        <fullName evidence="1">Cell division protein ZipA</fullName>
    </recommendedName>
</protein>
<sequence length="341" mass="37811">MMQDLRLILIIVGAIAIIALLVHGFWTSRKERSSMFRDRPLKRMKSKRDDDSYDDDVEEEEGVGEVRVHRVNHAPGNAQEHDAPRQSPQHQYQPPYASAQPRQPAQQPPEAPAQPQQRPQYGQPSQPQPAQQPAQPVQQPVQQQPVAPQVQSAPQQPVQPAPQQPAPQPAPQTFQPAEPVAEPAPAPEPVVEEAPVAEKPQRKEAVIIMNVAAHHGSELSGEVLLNSIQQAGFKFGDMNIFHRHLSPDGSGPALFSLANMVNPGTFDPEMTGDFSTPGVTIFMQVPSYGDELQNFKLMLQSAQHIADEVGGVVLDDQRRMMTPQKLREYQDRIREVKESNA</sequence>
<proteinExistence type="inferred from homology"/>
<comment type="function">
    <text evidence="1">Essential cell division protein that stabilizes the FtsZ protofilaments by cross-linking them and that serves as a cytoplasmic membrane anchor for the Z ring. Also required for the recruitment to the septal ring of downstream cell division proteins.</text>
</comment>
<comment type="subunit">
    <text evidence="1">Interacts with FtsZ via their C-terminal domains.</text>
</comment>
<comment type="subcellular location">
    <subcellularLocation>
        <location evidence="1">Cell inner membrane</location>
        <topology evidence="1">Single-pass type I membrane protein</topology>
    </subcellularLocation>
    <text evidence="1">Localizes to the Z ring in an FtsZ-dependent manner.</text>
</comment>
<comment type="similarity">
    <text evidence="1">Belongs to the ZipA family.</text>
</comment>
<reference key="1">
    <citation type="submission" date="2007-08" db="EMBL/GenBank/DDBJ databases">
        <authorList>
            <consortium name="The Citrobacter koseri Genome Sequencing Project"/>
            <person name="McClelland M."/>
            <person name="Sanderson E.K."/>
            <person name="Porwollik S."/>
            <person name="Spieth J."/>
            <person name="Clifton W.S."/>
            <person name="Latreille P."/>
            <person name="Courtney L."/>
            <person name="Wang C."/>
            <person name="Pepin K."/>
            <person name="Bhonagiri V."/>
            <person name="Nash W."/>
            <person name="Johnson M."/>
            <person name="Thiruvilangam P."/>
            <person name="Wilson R."/>
        </authorList>
    </citation>
    <scope>NUCLEOTIDE SEQUENCE [LARGE SCALE GENOMIC DNA]</scope>
    <source>
        <strain>ATCC BAA-895 / CDC 4225-83 / SGSC4696</strain>
    </source>
</reference>
<keyword id="KW-0131">Cell cycle</keyword>
<keyword id="KW-0132">Cell division</keyword>
<keyword id="KW-0997">Cell inner membrane</keyword>
<keyword id="KW-1003">Cell membrane</keyword>
<keyword id="KW-0472">Membrane</keyword>
<keyword id="KW-1185">Reference proteome</keyword>
<keyword id="KW-0812">Transmembrane</keyword>
<keyword id="KW-1133">Transmembrane helix</keyword>
<name>ZIPA_CITK8</name>
<accession>A8ADI1</accession>